<evidence type="ECO:0000255" key="1">
    <source>
        <dbReference type="HAMAP-Rule" id="MF_00127"/>
    </source>
</evidence>
<dbReference type="EC" id="6.1.1.21" evidence="1"/>
<dbReference type="EMBL" id="CP000644">
    <property type="protein sequence ID" value="ABO90623.1"/>
    <property type="molecule type" value="Genomic_DNA"/>
</dbReference>
<dbReference type="RefSeq" id="WP_005310430.1">
    <property type="nucleotide sequence ID" value="NC_009348.1"/>
</dbReference>
<dbReference type="SMR" id="A4SP01"/>
<dbReference type="STRING" id="29491.GCA_000820065_00283"/>
<dbReference type="KEGG" id="asa:ASA_2598"/>
<dbReference type="eggNOG" id="COG0124">
    <property type="taxonomic scope" value="Bacteria"/>
</dbReference>
<dbReference type="HOGENOM" id="CLU_025113_1_1_6"/>
<dbReference type="Proteomes" id="UP000000225">
    <property type="component" value="Chromosome"/>
</dbReference>
<dbReference type="GO" id="GO:0005737">
    <property type="term" value="C:cytoplasm"/>
    <property type="evidence" value="ECO:0007669"/>
    <property type="project" value="UniProtKB-SubCell"/>
</dbReference>
<dbReference type="GO" id="GO:0005524">
    <property type="term" value="F:ATP binding"/>
    <property type="evidence" value="ECO:0007669"/>
    <property type="project" value="UniProtKB-UniRule"/>
</dbReference>
<dbReference type="GO" id="GO:0004821">
    <property type="term" value="F:histidine-tRNA ligase activity"/>
    <property type="evidence" value="ECO:0007669"/>
    <property type="project" value="UniProtKB-UniRule"/>
</dbReference>
<dbReference type="GO" id="GO:0006427">
    <property type="term" value="P:histidyl-tRNA aminoacylation"/>
    <property type="evidence" value="ECO:0007669"/>
    <property type="project" value="UniProtKB-UniRule"/>
</dbReference>
<dbReference type="CDD" id="cd00773">
    <property type="entry name" value="HisRS-like_core"/>
    <property type="match status" value="1"/>
</dbReference>
<dbReference type="CDD" id="cd00859">
    <property type="entry name" value="HisRS_anticodon"/>
    <property type="match status" value="1"/>
</dbReference>
<dbReference type="FunFam" id="3.30.930.10:FF:000005">
    <property type="entry name" value="Histidine--tRNA ligase"/>
    <property type="match status" value="1"/>
</dbReference>
<dbReference type="Gene3D" id="3.40.50.800">
    <property type="entry name" value="Anticodon-binding domain"/>
    <property type="match status" value="1"/>
</dbReference>
<dbReference type="Gene3D" id="3.30.930.10">
    <property type="entry name" value="Bira Bifunctional Protein, Domain 2"/>
    <property type="match status" value="1"/>
</dbReference>
<dbReference type="HAMAP" id="MF_00127">
    <property type="entry name" value="His_tRNA_synth"/>
    <property type="match status" value="1"/>
</dbReference>
<dbReference type="InterPro" id="IPR006195">
    <property type="entry name" value="aa-tRNA-synth_II"/>
</dbReference>
<dbReference type="InterPro" id="IPR045864">
    <property type="entry name" value="aa-tRNA-synth_II/BPL/LPL"/>
</dbReference>
<dbReference type="InterPro" id="IPR004154">
    <property type="entry name" value="Anticodon-bd"/>
</dbReference>
<dbReference type="InterPro" id="IPR036621">
    <property type="entry name" value="Anticodon-bd_dom_sf"/>
</dbReference>
<dbReference type="InterPro" id="IPR015807">
    <property type="entry name" value="His-tRNA-ligase"/>
</dbReference>
<dbReference type="InterPro" id="IPR041715">
    <property type="entry name" value="HisRS-like_core"/>
</dbReference>
<dbReference type="InterPro" id="IPR004516">
    <property type="entry name" value="HisRS/HisZ"/>
</dbReference>
<dbReference type="InterPro" id="IPR033656">
    <property type="entry name" value="HisRS_anticodon"/>
</dbReference>
<dbReference type="NCBIfam" id="TIGR00442">
    <property type="entry name" value="hisS"/>
    <property type="match status" value="1"/>
</dbReference>
<dbReference type="PANTHER" id="PTHR43707:SF1">
    <property type="entry name" value="HISTIDINE--TRNA LIGASE, MITOCHONDRIAL-RELATED"/>
    <property type="match status" value="1"/>
</dbReference>
<dbReference type="PANTHER" id="PTHR43707">
    <property type="entry name" value="HISTIDYL-TRNA SYNTHETASE"/>
    <property type="match status" value="1"/>
</dbReference>
<dbReference type="Pfam" id="PF03129">
    <property type="entry name" value="HGTP_anticodon"/>
    <property type="match status" value="1"/>
</dbReference>
<dbReference type="Pfam" id="PF13393">
    <property type="entry name" value="tRNA-synt_His"/>
    <property type="match status" value="1"/>
</dbReference>
<dbReference type="PIRSF" id="PIRSF001549">
    <property type="entry name" value="His-tRNA_synth"/>
    <property type="match status" value="1"/>
</dbReference>
<dbReference type="SUPFAM" id="SSF52954">
    <property type="entry name" value="Class II aaRS ABD-related"/>
    <property type="match status" value="1"/>
</dbReference>
<dbReference type="SUPFAM" id="SSF55681">
    <property type="entry name" value="Class II aaRS and biotin synthetases"/>
    <property type="match status" value="1"/>
</dbReference>
<dbReference type="PROSITE" id="PS50862">
    <property type="entry name" value="AA_TRNA_LIGASE_II"/>
    <property type="match status" value="1"/>
</dbReference>
<reference key="1">
    <citation type="journal article" date="2008" name="BMC Genomics">
        <title>The genome of Aeromonas salmonicida subsp. salmonicida A449: insights into the evolution of a fish pathogen.</title>
        <authorList>
            <person name="Reith M.E."/>
            <person name="Singh R.K."/>
            <person name="Curtis B."/>
            <person name="Boyd J.M."/>
            <person name="Bouevitch A."/>
            <person name="Kimball J."/>
            <person name="Munholland J."/>
            <person name="Murphy C."/>
            <person name="Sarty D."/>
            <person name="Williams J."/>
            <person name="Nash J.H."/>
            <person name="Johnson S.C."/>
            <person name="Brown L.L."/>
        </authorList>
    </citation>
    <scope>NUCLEOTIDE SEQUENCE [LARGE SCALE GENOMIC DNA]</scope>
    <source>
        <strain>A449</strain>
    </source>
</reference>
<comment type="catalytic activity">
    <reaction evidence="1">
        <text>tRNA(His) + L-histidine + ATP = L-histidyl-tRNA(His) + AMP + diphosphate + H(+)</text>
        <dbReference type="Rhea" id="RHEA:17313"/>
        <dbReference type="Rhea" id="RHEA-COMP:9665"/>
        <dbReference type="Rhea" id="RHEA-COMP:9689"/>
        <dbReference type="ChEBI" id="CHEBI:15378"/>
        <dbReference type="ChEBI" id="CHEBI:30616"/>
        <dbReference type="ChEBI" id="CHEBI:33019"/>
        <dbReference type="ChEBI" id="CHEBI:57595"/>
        <dbReference type="ChEBI" id="CHEBI:78442"/>
        <dbReference type="ChEBI" id="CHEBI:78527"/>
        <dbReference type="ChEBI" id="CHEBI:456215"/>
        <dbReference type="EC" id="6.1.1.21"/>
    </reaction>
</comment>
<comment type="subunit">
    <text evidence="1">Homodimer.</text>
</comment>
<comment type="subcellular location">
    <subcellularLocation>
        <location evidence="1">Cytoplasm</location>
    </subcellularLocation>
</comment>
<comment type="similarity">
    <text evidence="1">Belongs to the class-II aminoacyl-tRNA synthetase family.</text>
</comment>
<gene>
    <name evidence="1" type="primary">hisS</name>
    <name type="ordered locus">ASA_2598</name>
</gene>
<proteinExistence type="inferred from homology"/>
<organism>
    <name type="scientific">Aeromonas salmonicida (strain A449)</name>
    <dbReference type="NCBI Taxonomy" id="382245"/>
    <lineage>
        <taxon>Bacteria</taxon>
        <taxon>Pseudomonadati</taxon>
        <taxon>Pseudomonadota</taxon>
        <taxon>Gammaproteobacteria</taxon>
        <taxon>Aeromonadales</taxon>
        <taxon>Aeromonadaceae</taxon>
        <taxon>Aeromonas</taxon>
    </lineage>
</organism>
<accession>A4SP01</accession>
<keyword id="KW-0030">Aminoacyl-tRNA synthetase</keyword>
<keyword id="KW-0067">ATP-binding</keyword>
<keyword id="KW-0963">Cytoplasm</keyword>
<keyword id="KW-0436">Ligase</keyword>
<keyword id="KW-0547">Nucleotide-binding</keyword>
<keyword id="KW-0648">Protein biosynthesis</keyword>
<sequence length="425" mass="47847">MAKQIQAIRGMNDCLPEQSPVWQKVEQILRQVVASYGYSEVRMPIVEQTHLFKRAIGEVTDVVEKEMYTFEDRNGDSLSLRPEGTASCVRAGIEHGLLYNQERRMWYMGPMFRHERPQKGRYRQFHQFGVELFGINGPDIDAELIMLTHRLWRLFGISDHVTLQLNTLGQSSERAAYRDALVAYLEQYKDQLDEESQRRMYSNPLRVLDSKDERVQAILVKAPRLFDHLGEESLAHFEGLKRLLESAGIKYEVNERLVRGLDYYNLTVFEWVTTSLGAQGTVCAGGRYDGLVEQLGGQATPAVGFAMGMERLVLMLETLELNADIRPAVDVYLAMVGEGSEQAGFQLAERLRDALPDLRLMSHCGGGNFKKQLKRADKSGAAIALILGETEVQNGEITIKYLRGQAEQQTVTVDAAIALLAAKGD</sequence>
<feature type="chain" id="PRO_1000016306" description="Histidine--tRNA ligase">
    <location>
        <begin position="1"/>
        <end position="425"/>
    </location>
</feature>
<name>SYH_AERS4</name>
<protein>
    <recommendedName>
        <fullName evidence="1">Histidine--tRNA ligase</fullName>
        <ecNumber evidence="1">6.1.1.21</ecNumber>
    </recommendedName>
    <alternativeName>
        <fullName evidence="1">Histidyl-tRNA synthetase</fullName>
        <shortName evidence="1">HisRS</shortName>
    </alternativeName>
</protein>